<organism evidence="13">
    <name type="scientific">Caenorhabditis elegans</name>
    <dbReference type="NCBI Taxonomy" id="6239"/>
    <lineage>
        <taxon>Eukaryota</taxon>
        <taxon>Metazoa</taxon>
        <taxon>Ecdysozoa</taxon>
        <taxon>Nematoda</taxon>
        <taxon>Chromadorea</taxon>
        <taxon>Rhabditida</taxon>
        <taxon>Rhabditina</taxon>
        <taxon>Rhabditomorpha</taxon>
        <taxon>Rhabditoidea</taxon>
        <taxon>Rhabditidae</taxon>
        <taxon>Peloderinae</taxon>
        <taxon>Caenorhabditis</taxon>
    </lineage>
</organism>
<comment type="function">
    <text evidence="8">Metalloproteinase.</text>
</comment>
<comment type="cofactor">
    <cofactor evidence="1">
        <name>Zn(2+)</name>
        <dbReference type="ChEBI" id="CHEBI:29105"/>
    </cofactor>
</comment>
<comment type="activity regulation">
    <text evidence="8">Inhibited by human TIMP1 and TIMP2 and the broad MMP inhibitors BB94 (Batimastat) and CT543.</text>
</comment>
<comment type="subcellular location">
    <subcellularLocation>
        <location evidence="10">Secreted</location>
        <location evidence="10">Extracellular space</location>
        <location evidence="10">Extracellular matrix</location>
    </subcellularLocation>
</comment>
<comment type="domain">
    <text evidence="1">The conserved cysteine present in the cysteine-switch motif binds the catalytic zinc ion, thus inhibiting the enzyme. The dissociation of the cysteine from the zinc ion upon the activation-peptide release activates the enzyme.</text>
</comment>
<comment type="similarity">
    <text evidence="4">Belongs to the peptidase M10A family.</text>
</comment>
<dbReference type="EC" id="3.4.24.-" evidence="8"/>
<dbReference type="EMBL" id="AB007815">
    <property type="protein sequence ID" value="BAA28351.1"/>
    <property type="molecule type" value="mRNA"/>
</dbReference>
<dbReference type="EMBL" id="BX284605">
    <property type="protein sequence ID" value="CCD66298.1"/>
    <property type="molecule type" value="Genomic_DNA"/>
</dbReference>
<dbReference type="PIR" id="T37248">
    <property type="entry name" value="T37248"/>
</dbReference>
<dbReference type="RefSeq" id="NP_503790.1">
    <property type="nucleotide sequence ID" value="NM_071389.6"/>
</dbReference>
<dbReference type="SMR" id="G5EBU3"/>
<dbReference type="STRING" id="6239.C31B8.8.1"/>
<dbReference type="MEROPS" id="M10.A07"/>
<dbReference type="GlyCosmos" id="G5EBU3">
    <property type="glycosylation" value="1 site, No reported glycans"/>
</dbReference>
<dbReference type="PaxDb" id="6239-C31B8.8"/>
<dbReference type="PeptideAtlas" id="G5EBU3"/>
<dbReference type="EnsemblMetazoa" id="C31B8.8.1">
    <property type="protein sequence ID" value="C31B8.8.1"/>
    <property type="gene ID" value="WBGene00016283"/>
</dbReference>
<dbReference type="GeneID" id="178748"/>
<dbReference type="KEGG" id="cel:CELE_C31B8.8"/>
<dbReference type="AGR" id="WB:WBGene00016283"/>
<dbReference type="CTD" id="178748"/>
<dbReference type="WormBase" id="C31B8.8">
    <property type="protein sequence ID" value="CE26674"/>
    <property type="gene ID" value="WBGene00016283"/>
    <property type="gene designation" value="zmp-3"/>
</dbReference>
<dbReference type="eggNOG" id="KOG1565">
    <property type="taxonomic scope" value="Eukaryota"/>
</dbReference>
<dbReference type="GeneTree" id="ENSGT00970000196003"/>
<dbReference type="HOGENOM" id="CLU_015489_0_0_1"/>
<dbReference type="InParanoid" id="G5EBU3"/>
<dbReference type="OMA" id="TRRTTLW"/>
<dbReference type="OrthoDB" id="406838at2759"/>
<dbReference type="PhylomeDB" id="G5EBU3"/>
<dbReference type="Reactome" id="R-CEL-1442490">
    <property type="pathway name" value="Collagen degradation"/>
</dbReference>
<dbReference type="Reactome" id="R-CEL-1474228">
    <property type="pathway name" value="Degradation of the extracellular matrix"/>
</dbReference>
<dbReference type="Reactome" id="R-CEL-1592389">
    <property type="pathway name" value="Activation of Matrix Metalloproteinases"/>
</dbReference>
<dbReference type="Reactome" id="R-CEL-210991">
    <property type="pathway name" value="Basigin interactions"/>
</dbReference>
<dbReference type="Reactome" id="R-CEL-2168880">
    <property type="pathway name" value="Scavenging of heme from plasma"/>
</dbReference>
<dbReference type="Reactome" id="R-CEL-2179392">
    <property type="pathway name" value="EGFR Transactivation by Gastrin"/>
</dbReference>
<dbReference type="Reactome" id="R-CEL-3928665">
    <property type="pathway name" value="EPH-ephrin mediated repulsion of cells"/>
</dbReference>
<dbReference type="Reactome" id="R-CEL-6798695">
    <property type="pathway name" value="Neutrophil degranulation"/>
</dbReference>
<dbReference type="PRO" id="PR:G5EBU3"/>
<dbReference type="Proteomes" id="UP000001940">
    <property type="component" value="Chromosome V"/>
</dbReference>
<dbReference type="Bgee" id="WBGene00016283">
    <property type="expression patterns" value="Expressed in larva and 2 other cell types or tissues"/>
</dbReference>
<dbReference type="GO" id="GO:0031012">
    <property type="term" value="C:extracellular matrix"/>
    <property type="evidence" value="ECO:0007669"/>
    <property type="project" value="InterPro"/>
</dbReference>
<dbReference type="GO" id="GO:0005615">
    <property type="term" value="C:extracellular space"/>
    <property type="evidence" value="ECO:0000318"/>
    <property type="project" value="GO_Central"/>
</dbReference>
<dbReference type="GO" id="GO:0004222">
    <property type="term" value="F:metalloendopeptidase activity"/>
    <property type="evidence" value="ECO:0000318"/>
    <property type="project" value="GO_Central"/>
</dbReference>
<dbReference type="GO" id="GO:0008237">
    <property type="term" value="F:metallopeptidase activity"/>
    <property type="evidence" value="ECO:0000315"/>
    <property type="project" value="UniProtKB"/>
</dbReference>
<dbReference type="GO" id="GO:0008270">
    <property type="term" value="F:zinc ion binding"/>
    <property type="evidence" value="ECO:0007669"/>
    <property type="project" value="InterPro"/>
</dbReference>
<dbReference type="GO" id="GO:0030574">
    <property type="term" value="P:collagen catabolic process"/>
    <property type="evidence" value="ECO:0000318"/>
    <property type="project" value="GO_Central"/>
</dbReference>
<dbReference type="GO" id="GO:0030198">
    <property type="term" value="P:extracellular matrix organization"/>
    <property type="evidence" value="ECO:0000318"/>
    <property type="project" value="GO_Central"/>
</dbReference>
<dbReference type="GO" id="GO:0006508">
    <property type="term" value="P:proteolysis"/>
    <property type="evidence" value="ECO:0007669"/>
    <property type="project" value="UniProtKB-KW"/>
</dbReference>
<dbReference type="CDD" id="cd00094">
    <property type="entry name" value="HX"/>
    <property type="match status" value="1"/>
</dbReference>
<dbReference type="CDD" id="cd04278">
    <property type="entry name" value="ZnMc_MMP"/>
    <property type="match status" value="1"/>
</dbReference>
<dbReference type="FunFam" id="2.110.10.10:FF:000023">
    <property type="entry name" value="Matrix metalloproteinase-C"/>
    <property type="match status" value="1"/>
</dbReference>
<dbReference type="FunFam" id="3.40.390.10:FF:000064">
    <property type="entry name" value="Matrix metalloproteinase-C"/>
    <property type="match status" value="1"/>
</dbReference>
<dbReference type="Gene3D" id="3.40.390.10">
    <property type="entry name" value="Collagenase (Catalytic Domain)"/>
    <property type="match status" value="1"/>
</dbReference>
<dbReference type="Gene3D" id="2.110.10.10">
    <property type="entry name" value="Hemopexin-like domain"/>
    <property type="match status" value="1"/>
</dbReference>
<dbReference type="InterPro" id="IPR000585">
    <property type="entry name" value="Hemopexin-like_dom"/>
</dbReference>
<dbReference type="InterPro" id="IPR036375">
    <property type="entry name" value="Hemopexin-like_dom_sf"/>
</dbReference>
<dbReference type="InterPro" id="IPR018487">
    <property type="entry name" value="Hemopexin-like_repeat"/>
</dbReference>
<dbReference type="InterPro" id="IPR033739">
    <property type="entry name" value="M10A_MMP"/>
</dbReference>
<dbReference type="InterPro" id="IPR024079">
    <property type="entry name" value="MetalloPept_cat_dom_sf"/>
</dbReference>
<dbReference type="InterPro" id="IPR001818">
    <property type="entry name" value="Pept_M10_metallopeptidase"/>
</dbReference>
<dbReference type="InterPro" id="IPR021190">
    <property type="entry name" value="Pept_M10A"/>
</dbReference>
<dbReference type="InterPro" id="IPR006026">
    <property type="entry name" value="Peptidase_Metallo"/>
</dbReference>
<dbReference type="InterPro" id="IPR036365">
    <property type="entry name" value="PGBD-like_sf"/>
</dbReference>
<dbReference type="PANTHER" id="PTHR10201">
    <property type="entry name" value="MATRIX METALLOPROTEINASE"/>
    <property type="match status" value="1"/>
</dbReference>
<dbReference type="PANTHER" id="PTHR10201:SF329">
    <property type="entry name" value="MATRIX METALLOPROTEINASE-C"/>
    <property type="match status" value="1"/>
</dbReference>
<dbReference type="Pfam" id="PF00413">
    <property type="entry name" value="Peptidase_M10"/>
    <property type="match status" value="1"/>
</dbReference>
<dbReference type="PIRSF" id="PIRSF001191">
    <property type="entry name" value="Peptidase_M10A_matrix"/>
    <property type="match status" value="1"/>
</dbReference>
<dbReference type="PRINTS" id="PR00138">
    <property type="entry name" value="MATRIXIN"/>
</dbReference>
<dbReference type="SMART" id="SM00120">
    <property type="entry name" value="HX"/>
    <property type="match status" value="3"/>
</dbReference>
<dbReference type="SMART" id="SM00235">
    <property type="entry name" value="ZnMc"/>
    <property type="match status" value="1"/>
</dbReference>
<dbReference type="SUPFAM" id="SSF50923">
    <property type="entry name" value="Hemopexin-like domain"/>
    <property type="match status" value="1"/>
</dbReference>
<dbReference type="SUPFAM" id="SSF55486">
    <property type="entry name" value="Metalloproteases ('zincins'), catalytic domain"/>
    <property type="match status" value="1"/>
</dbReference>
<dbReference type="SUPFAM" id="SSF47090">
    <property type="entry name" value="PGBD-like"/>
    <property type="match status" value="1"/>
</dbReference>
<dbReference type="PROSITE" id="PS51642">
    <property type="entry name" value="HEMOPEXIN_2"/>
    <property type="match status" value="2"/>
</dbReference>
<name>MMPC_CAEEL</name>
<reference evidence="12" key="1">
    <citation type="journal article" date="1998" name="Gene">
        <title>Cloning of three Caenorhabditis elegans genes potentially encoding novel matrix metalloproteinases.</title>
        <authorList>
            <person name="Wada K."/>
            <person name="Sato H."/>
            <person name="Kinoh H."/>
            <person name="Kajita M."/>
            <person name="Yamamoto H."/>
            <person name="Seiki M."/>
        </authorList>
    </citation>
    <scope>NUCLEOTIDE SEQUENCE [MRNA]</scope>
    <scope>CATALYTIC ACTIVITY</scope>
    <scope>ACTIVITY REGULATION</scope>
    <source>
        <strain evidence="12">Bristol N2</strain>
    </source>
</reference>
<reference evidence="13" key="2">
    <citation type="journal article" date="1998" name="Science">
        <title>Genome sequence of the nematode C. elegans: a platform for investigating biology.</title>
        <authorList>
            <consortium name="The C. elegans sequencing consortium"/>
        </authorList>
    </citation>
    <scope>NUCLEOTIDE SEQUENCE [LARGE SCALE GENOMIC DNA]</scope>
    <source>
        <strain evidence="13">Bristol N2</strain>
    </source>
</reference>
<protein>
    <recommendedName>
        <fullName evidence="11">Matrix metalloproteinase-C</fullName>
        <shortName evidence="11">MMP-C</shortName>
        <shortName evidence="9">MMP-C31</shortName>
        <ecNumber evidence="8">3.4.24.-</ecNumber>
    </recommendedName>
    <alternativeName>
        <fullName evidence="14">Zinc metalloprotease 3</fullName>
    </alternativeName>
</protein>
<accession>G5EBU3</accession>
<proteinExistence type="evidence at protein level"/>
<evidence type="ECO:0000250" key="1">
    <source>
        <dbReference type="UniProtKB" id="P03956"/>
    </source>
</evidence>
<evidence type="ECO:0000250" key="2">
    <source>
        <dbReference type="UniProtKB" id="P09238"/>
    </source>
</evidence>
<evidence type="ECO:0000250" key="3">
    <source>
        <dbReference type="UniProtKB" id="P22757"/>
    </source>
</evidence>
<evidence type="ECO:0000255" key="4"/>
<evidence type="ECO:0000255" key="5">
    <source>
        <dbReference type="PROSITE-ProRule" id="PRU00498"/>
    </source>
</evidence>
<evidence type="ECO:0000255" key="6">
    <source>
        <dbReference type="PROSITE-ProRule" id="PRU01011"/>
    </source>
</evidence>
<evidence type="ECO:0000256" key="7">
    <source>
        <dbReference type="SAM" id="MobiDB-lite"/>
    </source>
</evidence>
<evidence type="ECO:0000269" key="8">
    <source>
    </source>
</evidence>
<evidence type="ECO:0000303" key="9">
    <source>
    </source>
</evidence>
<evidence type="ECO:0000305" key="10"/>
<evidence type="ECO:0000305" key="11">
    <source>
    </source>
</evidence>
<evidence type="ECO:0000312" key="12">
    <source>
        <dbReference type="EMBL" id="BAA28351.1"/>
    </source>
</evidence>
<evidence type="ECO:0000312" key="13">
    <source>
        <dbReference type="Proteomes" id="UP000001940"/>
    </source>
</evidence>
<evidence type="ECO:0000312" key="14">
    <source>
        <dbReference type="WormBase" id="C31B8.8"/>
    </source>
</evidence>
<sequence length="579" mass="62540">MRLIYVIAILLVSTCQAGFFSSLVSRFTGGGNSSPSSSSSSSSFSNSRKPSLSDEKARSYLQTFGYVPPSNSLQSRNGMAGDIQSAEQVFKSAIRKFQEFAGIAKTGFLDAATKAKMALSRCGVTDAPLALTSGSSQFKWSKTRLTYSIESWSSDLSKDDVRRAISEAYGLWSKVTPLEFSEVPAGSTSDIKIRFGVRNHNDPWPFDGEGGVLAHATMPESGMFHFDDDENWTYKDARKIHNNEATDLLAVAIHEGGHTLGLEHSRDENAIMAPFYQKTTDSSGNYVYPNLKSDDISAIQAIYGAGSGRSSSGSDFGGSSGGGSRTTARPTTTTRSWFGRFFGDDDDDVRSRTTTRRTTLWPTTQSPFSGDDWGSGSGSSGRGGSSSGSSGGGCPSHIDAYTPSSSFSYAFSGSQVYTISGTKVTKVQSIHDLFPSAPTPVNAALWNPISGSMLLFSSNRVYSYYFSNIRQIFQMDSGFPKTLPSDLGFSVSGALRWINGHQILMSSGDEFAVYDEFWNQVTLKNRISSYFPNLPRGVKGVESPAGSVITAFTSNQVFEYNSRTKSIGRQSGFSSYIAC</sequence>
<gene>
    <name evidence="14" type="primary">zmp-3</name>
    <name evidence="14" type="ORF">C31B8.8</name>
</gene>
<keyword id="KW-0272">Extracellular matrix</keyword>
<keyword id="KW-0325">Glycoprotein</keyword>
<keyword id="KW-0378">Hydrolase</keyword>
<keyword id="KW-0479">Metal-binding</keyword>
<keyword id="KW-0482">Metalloprotease</keyword>
<keyword id="KW-0645">Protease</keyword>
<keyword id="KW-1185">Reference proteome</keyword>
<keyword id="KW-0677">Repeat</keyword>
<keyword id="KW-0964">Secreted</keyword>
<keyword id="KW-0732">Signal</keyword>
<keyword id="KW-0862">Zinc</keyword>
<keyword id="KW-0865">Zymogen</keyword>
<feature type="signal peptide" evidence="4">
    <location>
        <begin position="1"/>
        <end position="17"/>
    </location>
</feature>
<feature type="propeptide" id="PRO_0000439233" description="Activation peptide" evidence="3">
    <location>
        <begin position="18"/>
        <end position="129"/>
    </location>
</feature>
<feature type="chain" id="PRO_5007915027" description="Matrix metalloproteinase-C" evidence="10">
    <location>
        <begin position="130"/>
        <end position="579"/>
    </location>
</feature>
<feature type="repeat" description="Hemopexin 1" evidence="6">
    <location>
        <begin position="395"/>
        <end position="437"/>
    </location>
</feature>
<feature type="repeat" description="Hemopexin 2" evidence="6">
    <location>
        <begin position="438"/>
        <end position="490"/>
    </location>
</feature>
<feature type="region of interest" description="Disordered" evidence="7">
    <location>
        <begin position="32"/>
        <end position="51"/>
    </location>
</feature>
<feature type="region of interest" description="Disordered" evidence="7">
    <location>
        <begin position="307"/>
        <end position="394"/>
    </location>
</feature>
<feature type="short sequence motif" description="Cysteine switch" evidence="1">
    <location>
        <begin position="120"/>
        <end position="127"/>
    </location>
</feature>
<feature type="compositionally biased region" description="Low complexity" evidence="7">
    <location>
        <begin position="33"/>
        <end position="50"/>
    </location>
</feature>
<feature type="compositionally biased region" description="Gly residues" evidence="7">
    <location>
        <begin position="315"/>
        <end position="324"/>
    </location>
</feature>
<feature type="compositionally biased region" description="Low complexity" evidence="7">
    <location>
        <begin position="325"/>
        <end position="341"/>
    </location>
</feature>
<feature type="compositionally biased region" description="Gly residues" evidence="7">
    <location>
        <begin position="373"/>
        <end position="394"/>
    </location>
</feature>
<feature type="active site" evidence="2">
    <location>
        <position position="255"/>
    </location>
</feature>
<feature type="binding site" description="in inhibited form" evidence="1">
    <location>
        <position position="122"/>
    </location>
    <ligand>
        <name>Zn(2+)</name>
        <dbReference type="ChEBI" id="CHEBI:29105"/>
        <label>2</label>
        <note>catalytic</note>
    </ligand>
</feature>
<feature type="binding site" evidence="1">
    <location>
        <position position="200"/>
    </location>
    <ligand>
        <name>Zn(2+)</name>
        <dbReference type="ChEBI" id="CHEBI:29105"/>
        <label>1</label>
    </ligand>
</feature>
<feature type="binding site" evidence="1">
    <location>
        <position position="202"/>
    </location>
    <ligand>
        <name>Zn(2+)</name>
        <dbReference type="ChEBI" id="CHEBI:29105"/>
        <label>1</label>
    </ligand>
</feature>
<feature type="binding site" evidence="1">
    <location>
        <position position="215"/>
    </location>
    <ligand>
        <name>Zn(2+)</name>
        <dbReference type="ChEBI" id="CHEBI:29105"/>
        <label>1</label>
    </ligand>
</feature>
<feature type="binding site" evidence="1">
    <location>
        <position position="225"/>
    </location>
    <ligand>
        <name>Zn(2+)</name>
        <dbReference type="ChEBI" id="CHEBI:29105"/>
        <label>1</label>
    </ligand>
</feature>
<feature type="binding site" evidence="1">
    <location>
        <position position="254"/>
    </location>
    <ligand>
        <name>Zn(2+)</name>
        <dbReference type="ChEBI" id="CHEBI:29105"/>
        <label>2</label>
        <note>catalytic</note>
    </ligand>
</feature>
<feature type="binding site" evidence="1">
    <location>
        <position position="258"/>
    </location>
    <ligand>
        <name>Zn(2+)</name>
        <dbReference type="ChEBI" id="CHEBI:29105"/>
        <label>2</label>
        <note>catalytic</note>
    </ligand>
</feature>
<feature type="binding site" evidence="1">
    <location>
        <position position="264"/>
    </location>
    <ligand>
        <name>Zn(2+)</name>
        <dbReference type="ChEBI" id="CHEBI:29105"/>
        <label>2</label>
        <note>catalytic</note>
    </ligand>
</feature>
<feature type="glycosylation site" description="N-linked (GlcNAc...) asparagine" evidence="5">
    <location>
        <position position="231"/>
    </location>
</feature>